<sequence length="206" mass="23294">MARYLGPKCKLSRREGTDLFLKSGVKANDEKCKMNTAPGQHGARRARLSDYGLQLREKQKVRRMYGVLEGQFKKYYVEANRRKGNTGATLLEILESRLDNVVYRMGFAATRAEARQLVVHKGIMLNGHTCNVPSAQVKAGDVVAVREKSKKQLRIQNAIELAKHRKELSWIDVNTDSLEGTMKSSPDRSELSADINEQLIIELYSK</sequence>
<organism>
    <name type="scientific">Francisella philomiragia subsp. philomiragia (strain ATCC 25017 / CCUG 19701 / FSC 153 / O#319-036)</name>
    <dbReference type="NCBI Taxonomy" id="484022"/>
    <lineage>
        <taxon>Bacteria</taxon>
        <taxon>Pseudomonadati</taxon>
        <taxon>Pseudomonadota</taxon>
        <taxon>Gammaproteobacteria</taxon>
        <taxon>Thiotrichales</taxon>
        <taxon>Francisellaceae</taxon>
        <taxon>Francisella</taxon>
    </lineage>
</organism>
<reference key="1">
    <citation type="submission" date="2007-12" db="EMBL/GenBank/DDBJ databases">
        <title>Complete sequence of chromosome of Francisella philomiragia subsp. philomiragia ATCC 25017.</title>
        <authorList>
            <consortium name="US DOE Joint Genome Institute"/>
            <person name="Copeland A."/>
            <person name="Lucas S."/>
            <person name="Lapidus A."/>
            <person name="Barry K."/>
            <person name="Detter J.C."/>
            <person name="Glavina del Rio T."/>
            <person name="Hammon N."/>
            <person name="Israni S."/>
            <person name="Dalin E."/>
            <person name="Tice H."/>
            <person name="Pitluck S."/>
            <person name="Chain P."/>
            <person name="Malfatti S."/>
            <person name="Shin M."/>
            <person name="Vergez L."/>
            <person name="Schmutz J."/>
            <person name="Larimer F."/>
            <person name="Land M."/>
            <person name="Hauser L."/>
            <person name="Richardson P."/>
        </authorList>
    </citation>
    <scope>NUCLEOTIDE SEQUENCE [LARGE SCALE GENOMIC DNA]</scope>
    <source>
        <strain>ATCC 25017 / CCUG 19701 / FSC 153 / O#319-036</strain>
    </source>
</reference>
<proteinExistence type="inferred from homology"/>
<feature type="chain" id="PRO_1000085974" description="Small ribosomal subunit protein uS4">
    <location>
        <begin position="1"/>
        <end position="206"/>
    </location>
</feature>
<feature type="domain" description="S4 RNA-binding" evidence="1">
    <location>
        <begin position="96"/>
        <end position="156"/>
    </location>
</feature>
<comment type="function">
    <text evidence="1">One of the primary rRNA binding proteins, it binds directly to 16S rRNA where it nucleates assembly of the body of the 30S subunit.</text>
</comment>
<comment type="function">
    <text evidence="1">With S5 and S12 plays an important role in translational accuracy.</text>
</comment>
<comment type="subunit">
    <text evidence="1">Part of the 30S ribosomal subunit. Contacts protein S5. The interaction surface between S4 and S5 is involved in control of translational fidelity.</text>
</comment>
<comment type="similarity">
    <text evidence="1">Belongs to the universal ribosomal protein uS4 family.</text>
</comment>
<name>RS4_FRAP2</name>
<dbReference type="EMBL" id="CP000937">
    <property type="protein sequence ID" value="ABZ86782.1"/>
    <property type="molecule type" value="Genomic_DNA"/>
</dbReference>
<dbReference type="SMR" id="B0U0W6"/>
<dbReference type="KEGG" id="fph:Fphi_0564"/>
<dbReference type="eggNOG" id="COG0522">
    <property type="taxonomic scope" value="Bacteria"/>
</dbReference>
<dbReference type="HOGENOM" id="CLU_092403_0_2_6"/>
<dbReference type="GO" id="GO:0015935">
    <property type="term" value="C:small ribosomal subunit"/>
    <property type="evidence" value="ECO:0007669"/>
    <property type="project" value="InterPro"/>
</dbReference>
<dbReference type="GO" id="GO:0019843">
    <property type="term" value="F:rRNA binding"/>
    <property type="evidence" value="ECO:0007669"/>
    <property type="project" value="UniProtKB-UniRule"/>
</dbReference>
<dbReference type="GO" id="GO:0003735">
    <property type="term" value="F:structural constituent of ribosome"/>
    <property type="evidence" value="ECO:0007669"/>
    <property type="project" value="InterPro"/>
</dbReference>
<dbReference type="GO" id="GO:0042274">
    <property type="term" value="P:ribosomal small subunit biogenesis"/>
    <property type="evidence" value="ECO:0007669"/>
    <property type="project" value="TreeGrafter"/>
</dbReference>
<dbReference type="GO" id="GO:0006412">
    <property type="term" value="P:translation"/>
    <property type="evidence" value="ECO:0007669"/>
    <property type="project" value="UniProtKB-UniRule"/>
</dbReference>
<dbReference type="CDD" id="cd00165">
    <property type="entry name" value="S4"/>
    <property type="match status" value="1"/>
</dbReference>
<dbReference type="FunFam" id="1.10.1050.10:FF:000001">
    <property type="entry name" value="30S ribosomal protein S4"/>
    <property type="match status" value="1"/>
</dbReference>
<dbReference type="FunFam" id="3.10.290.10:FF:000001">
    <property type="entry name" value="30S ribosomal protein S4"/>
    <property type="match status" value="1"/>
</dbReference>
<dbReference type="Gene3D" id="1.10.1050.10">
    <property type="entry name" value="Ribosomal Protein S4 Delta 41, Chain A, domain 1"/>
    <property type="match status" value="1"/>
</dbReference>
<dbReference type="Gene3D" id="3.10.290.10">
    <property type="entry name" value="RNA-binding S4 domain"/>
    <property type="match status" value="1"/>
</dbReference>
<dbReference type="HAMAP" id="MF_01306_B">
    <property type="entry name" value="Ribosomal_uS4_B"/>
    <property type="match status" value="1"/>
</dbReference>
<dbReference type="InterPro" id="IPR022801">
    <property type="entry name" value="Ribosomal_uS4"/>
</dbReference>
<dbReference type="InterPro" id="IPR005709">
    <property type="entry name" value="Ribosomal_uS4_bac-type"/>
</dbReference>
<dbReference type="InterPro" id="IPR018079">
    <property type="entry name" value="Ribosomal_uS4_CS"/>
</dbReference>
<dbReference type="InterPro" id="IPR001912">
    <property type="entry name" value="Ribosomal_uS4_N"/>
</dbReference>
<dbReference type="InterPro" id="IPR002942">
    <property type="entry name" value="S4_RNA-bd"/>
</dbReference>
<dbReference type="InterPro" id="IPR036986">
    <property type="entry name" value="S4_RNA-bd_sf"/>
</dbReference>
<dbReference type="NCBIfam" id="NF003717">
    <property type="entry name" value="PRK05327.1"/>
    <property type="match status" value="1"/>
</dbReference>
<dbReference type="NCBIfam" id="TIGR01017">
    <property type="entry name" value="rpsD_bact"/>
    <property type="match status" value="1"/>
</dbReference>
<dbReference type="PANTHER" id="PTHR11831">
    <property type="entry name" value="30S 40S RIBOSOMAL PROTEIN"/>
    <property type="match status" value="1"/>
</dbReference>
<dbReference type="PANTHER" id="PTHR11831:SF4">
    <property type="entry name" value="SMALL RIBOSOMAL SUBUNIT PROTEIN US4M"/>
    <property type="match status" value="1"/>
</dbReference>
<dbReference type="Pfam" id="PF00163">
    <property type="entry name" value="Ribosomal_S4"/>
    <property type="match status" value="1"/>
</dbReference>
<dbReference type="Pfam" id="PF01479">
    <property type="entry name" value="S4"/>
    <property type="match status" value="1"/>
</dbReference>
<dbReference type="SMART" id="SM01390">
    <property type="entry name" value="Ribosomal_S4"/>
    <property type="match status" value="1"/>
</dbReference>
<dbReference type="SMART" id="SM00363">
    <property type="entry name" value="S4"/>
    <property type="match status" value="1"/>
</dbReference>
<dbReference type="SUPFAM" id="SSF55174">
    <property type="entry name" value="Alpha-L RNA-binding motif"/>
    <property type="match status" value="1"/>
</dbReference>
<dbReference type="PROSITE" id="PS00632">
    <property type="entry name" value="RIBOSOMAL_S4"/>
    <property type="match status" value="1"/>
</dbReference>
<dbReference type="PROSITE" id="PS50889">
    <property type="entry name" value="S4"/>
    <property type="match status" value="1"/>
</dbReference>
<accession>B0U0W6</accession>
<keyword id="KW-0687">Ribonucleoprotein</keyword>
<keyword id="KW-0689">Ribosomal protein</keyword>
<keyword id="KW-0694">RNA-binding</keyword>
<keyword id="KW-0699">rRNA-binding</keyword>
<gene>
    <name evidence="1" type="primary">rpsD</name>
    <name type="ordered locus">Fphi_0564</name>
</gene>
<protein>
    <recommendedName>
        <fullName evidence="1">Small ribosomal subunit protein uS4</fullName>
    </recommendedName>
    <alternativeName>
        <fullName evidence="2">30S ribosomal protein S4</fullName>
    </alternativeName>
</protein>
<evidence type="ECO:0000255" key="1">
    <source>
        <dbReference type="HAMAP-Rule" id="MF_01306"/>
    </source>
</evidence>
<evidence type="ECO:0000305" key="2"/>